<feature type="chain" id="PRO_0000184309" description="Ribosomal RNA small subunit methyltransferase G">
    <location>
        <begin position="1"/>
        <end position="216"/>
    </location>
</feature>
<feature type="binding site" evidence="1">
    <location>
        <position position="83"/>
    </location>
    <ligand>
        <name>S-adenosyl-L-methionine</name>
        <dbReference type="ChEBI" id="CHEBI:59789"/>
    </ligand>
</feature>
<feature type="binding site" evidence="1">
    <location>
        <position position="88"/>
    </location>
    <ligand>
        <name>S-adenosyl-L-methionine</name>
        <dbReference type="ChEBI" id="CHEBI:59789"/>
    </ligand>
</feature>
<feature type="binding site" evidence="1">
    <location>
        <begin position="134"/>
        <end position="135"/>
    </location>
    <ligand>
        <name>S-adenosyl-L-methionine</name>
        <dbReference type="ChEBI" id="CHEBI:59789"/>
    </ligand>
</feature>
<feature type="binding site" evidence="1">
    <location>
        <position position="149"/>
    </location>
    <ligand>
        <name>S-adenosyl-L-methionine</name>
        <dbReference type="ChEBI" id="CHEBI:59789"/>
    </ligand>
</feature>
<gene>
    <name evidence="1" type="primary">rsmG</name>
    <name type="ordered locus">PP_0003</name>
</gene>
<evidence type="ECO:0000255" key="1">
    <source>
        <dbReference type="HAMAP-Rule" id="MF_00074"/>
    </source>
</evidence>
<name>RSMG_PSEPK</name>
<accession>P0A124</accession>
<accession>P25757</accession>
<dbReference type="EC" id="2.1.1.170" evidence="1"/>
<dbReference type="EMBL" id="AE015451">
    <property type="protein sequence ID" value="AAN65637.1"/>
    <property type="molecule type" value="Genomic_DNA"/>
</dbReference>
<dbReference type="RefSeq" id="NP_742173.1">
    <property type="nucleotide sequence ID" value="NC_002947.4"/>
</dbReference>
<dbReference type="RefSeq" id="WP_003253179.1">
    <property type="nucleotide sequence ID" value="NZ_CP169744.1"/>
</dbReference>
<dbReference type="SMR" id="P0A124"/>
<dbReference type="STRING" id="160488.PP_0003"/>
<dbReference type="PaxDb" id="160488-PP_0003"/>
<dbReference type="GeneID" id="83683236"/>
<dbReference type="KEGG" id="ppu:PP_0003"/>
<dbReference type="PATRIC" id="fig|160488.4.peg.3"/>
<dbReference type="eggNOG" id="COG0357">
    <property type="taxonomic scope" value="Bacteria"/>
</dbReference>
<dbReference type="HOGENOM" id="CLU_065341_2_0_6"/>
<dbReference type="OrthoDB" id="9808773at2"/>
<dbReference type="PhylomeDB" id="P0A124"/>
<dbReference type="BioCyc" id="PPUT160488:G1G01-3-MONOMER"/>
<dbReference type="Proteomes" id="UP000000556">
    <property type="component" value="Chromosome"/>
</dbReference>
<dbReference type="GO" id="GO:0005829">
    <property type="term" value="C:cytosol"/>
    <property type="evidence" value="ECO:0007669"/>
    <property type="project" value="TreeGrafter"/>
</dbReference>
<dbReference type="GO" id="GO:0070043">
    <property type="term" value="F:rRNA (guanine-N7-)-methyltransferase activity"/>
    <property type="evidence" value="ECO:0007669"/>
    <property type="project" value="UniProtKB-UniRule"/>
</dbReference>
<dbReference type="CDD" id="cd02440">
    <property type="entry name" value="AdoMet_MTases"/>
    <property type="match status" value="1"/>
</dbReference>
<dbReference type="Gene3D" id="3.40.50.150">
    <property type="entry name" value="Vaccinia Virus protein VP39"/>
    <property type="match status" value="1"/>
</dbReference>
<dbReference type="HAMAP" id="MF_00074">
    <property type="entry name" value="16SrRNA_methyltr_G"/>
    <property type="match status" value="1"/>
</dbReference>
<dbReference type="InterPro" id="IPR003682">
    <property type="entry name" value="rRNA_ssu_MeTfrase_G"/>
</dbReference>
<dbReference type="InterPro" id="IPR029063">
    <property type="entry name" value="SAM-dependent_MTases_sf"/>
</dbReference>
<dbReference type="NCBIfam" id="TIGR00138">
    <property type="entry name" value="rsmG_gidB"/>
    <property type="match status" value="1"/>
</dbReference>
<dbReference type="PANTHER" id="PTHR31760">
    <property type="entry name" value="S-ADENOSYL-L-METHIONINE-DEPENDENT METHYLTRANSFERASES SUPERFAMILY PROTEIN"/>
    <property type="match status" value="1"/>
</dbReference>
<dbReference type="PANTHER" id="PTHR31760:SF0">
    <property type="entry name" value="S-ADENOSYL-L-METHIONINE-DEPENDENT METHYLTRANSFERASES SUPERFAMILY PROTEIN"/>
    <property type="match status" value="1"/>
</dbReference>
<dbReference type="Pfam" id="PF02527">
    <property type="entry name" value="GidB"/>
    <property type="match status" value="1"/>
</dbReference>
<dbReference type="PIRSF" id="PIRSF003078">
    <property type="entry name" value="GidB"/>
    <property type="match status" value="1"/>
</dbReference>
<dbReference type="SUPFAM" id="SSF53335">
    <property type="entry name" value="S-adenosyl-L-methionine-dependent methyltransferases"/>
    <property type="match status" value="1"/>
</dbReference>
<proteinExistence type="inferred from homology"/>
<keyword id="KW-0963">Cytoplasm</keyword>
<keyword id="KW-0489">Methyltransferase</keyword>
<keyword id="KW-1185">Reference proteome</keyword>
<keyword id="KW-0698">rRNA processing</keyword>
<keyword id="KW-0949">S-adenosyl-L-methionine</keyword>
<keyword id="KW-0808">Transferase</keyword>
<organism>
    <name type="scientific">Pseudomonas putida (strain ATCC 47054 / DSM 6125 / CFBP 8728 / NCIMB 11950 / KT2440)</name>
    <dbReference type="NCBI Taxonomy" id="160488"/>
    <lineage>
        <taxon>Bacteria</taxon>
        <taxon>Pseudomonadati</taxon>
        <taxon>Pseudomonadota</taxon>
        <taxon>Gammaproteobacteria</taxon>
        <taxon>Pseudomonadales</taxon>
        <taxon>Pseudomonadaceae</taxon>
        <taxon>Pseudomonas</taxon>
    </lineage>
</organism>
<sequence>MSSLVTPQHAEELSTGARQLGVELTAEQHEKLLGYLALLIKWNKAYNLTAVRDPDEMVSRHLLDSLSVMSFIHNDRDNWLDVGSGGGMPGIPLAILHPHKRVTVLDANGKKTRFLTQVKMELKLDNLTVIHSRVEAFQPAQPFDGIISRAFSSMENFTNWTRHLGDTGTQWLAMKGLHPADELVALPADFTVESEQALTVPGCQGQRHLLILRRKA</sequence>
<reference key="1">
    <citation type="journal article" date="2002" name="Environ. Microbiol.">
        <title>Complete genome sequence and comparative analysis of the metabolically versatile Pseudomonas putida KT2440.</title>
        <authorList>
            <person name="Nelson K.E."/>
            <person name="Weinel C."/>
            <person name="Paulsen I.T."/>
            <person name="Dodson R.J."/>
            <person name="Hilbert H."/>
            <person name="Martins dos Santos V.A.P."/>
            <person name="Fouts D.E."/>
            <person name="Gill S.R."/>
            <person name="Pop M."/>
            <person name="Holmes M."/>
            <person name="Brinkac L.M."/>
            <person name="Beanan M.J."/>
            <person name="DeBoy R.T."/>
            <person name="Daugherty S.C."/>
            <person name="Kolonay J.F."/>
            <person name="Madupu R."/>
            <person name="Nelson W.C."/>
            <person name="White O."/>
            <person name="Peterson J.D."/>
            <person name="Khouri H.M."/>
            <person name="Hance I."/>
            <person name="Chris Lee P."/>
            <person name="Holtzapple E.K."/>
            <person name="Scanlan D."/>
            <person name="Tran K."/>
            <person name="Moazzez A."/>
            <person name="Utterback T.R."/>
            <person name="Rizzo M."/>
            <person name="Lee K."/>
            <person name="Kosack D."/>
            <person name="Moestl D."/>
            <person name="Wedler H."/>
            <person name="Lauber J."/>
            <person name="Stjepandic D."/>
            <person name="Hoheisel J."/>
            <person name="Straetz M."/>
            <person name="Heim S."/>
            <person name="Kiewitz C."/>
            <person name="Eisen J.A."/>
            <person name="Timmis K.N."/>
            <person name="Duesterhoeft A."/>
            <person name="Tuemmler B."/>
            <person name="Fraser C.M."/>
        </authorList>
    </citation>
    <scope>NUCLEOTIDE SEQUENCE [LARGE SCALE GENOMIC DNA]</scope>
    <source>
        <strain>ATCC 47054 / DSM 6125 / CFBP 8728 / NCIMB 11950 / KT2440</strain>
    </source>
</reference>
<comment type="function">
    <text evidence="1">Specifically methylates the N7 position of guanine in position 527 of 16S rRNA.</text>
</comment>
<comment type="catalytic activity">
    <reaction evidence="1">
        <text>guanosine(527) in 16S rRNA + S-adenosyl-L-methionine = N(7)-methylguanosine(527) in 16S rRNA + S-adenosyl-L-homocysteine</text>
        <dbReference type="Rhea" id="RHEA:42732"/>
        <dbReference type="Rhea" id="RHEA-COMP:10209"/>
        <dbReference type="Rhea" id="RHEA-COMP:10210"/>
        <dbReference type="ChEBI" id="CHEBI:57856"/>
        <dbReference type="ChEBI" id="CHEBI:59789"/>
        <dbReference type="ChEBI" id="CHEBI:74269"/>
        <dbReference type="ChEBI" id="CHEBI:74480"/>
        <dbReference type="EC" id="2.1.1.170"/>
    </reaction>
</comment>
<comment type="subcellular location">
    <subcellularLocation>
        <location evidence="1">Cytoplasm</location>
    </subcellularLocation>
</comment>
<comment type="similarity">
    <text evidence="1">Belongs to the methyltransferase superfamily. RNA methyltransferase RsmG family.</text>
</comment>
<protein>
    <recommendedName>
        <fullName evidence="1">Ribosomal RNA small subunit methyltransferase G</fullName>
        <ecNumber evidence="1">2.1.1.170</ecNumber>
    </recommendedName>
    <alternativeName>
        <fullName evidence="1">16S rRNA 7-methylguanosine methyltransferase</fullName>
        <shortName evidence="1">16S rRNA m7G methyltransferase</shortName>
    </alternativeName>
</protein>